<name>COX4_STRCO</name>
<gene>
    <name type="primary">ctaF</name>
    <name type="ordered locus">SCO2154</name>
    <name type="ORF">SC6G10.27c</name>
</gene>
<accession>Q9X812</accession>
<comment type="function">
    <text evidence="1">Part of cytochrome c oxidase, its function is unknown.</text>
</comment>
<comment type="catalytic activity">
    <reaction>
        <text>4 Fe(II)-[cytochrome c] + O2 + 8 H(+)(in) = 4 Fe(III)-[cytochrome c] + 2 H2O + 4 H(+)(out)</text>
        <dbReference type="Rhea" id="RHEA:11436"/>
        <dbReference type="Rhea" id="RHEA-COMP:10350"/>
        <dbReference type="Rhea" id="RHEA-COMP:14399"/>
        <dbReference type="ChEBI" id="CHEBI:15377"/>
        <dbReference type="ChEBI" id="CHEBI:15378"/>
        <dbReference type="ChEBI" id="CHEBI:15379"/>
        <dbReference type="ChEBI" id="CHEBI:29033"/>
        <dbReference type="ChEBI" id="CHEBI:29034"/>
        <dbReference type="EC" id="7.1.1.9"/>
    </reaction>
</comment>
<comment type="subunit">
    <text evidence="1">Associates with subunits I, II and III to form cytochrome c oxidase.</text>
</comment>
<comment type="subcellular location">
    <subcellularLocation>
        <location evidence="1">Cell membrane</location>
        <topology evidence="1">Multi-pass membrane protein</topology>
    </subcellularLocation>
</comment>
<comment type="similarity">
    <text evidence="3">Belongs to the cytochrome c oxidase bacterial subunit CtaF family.</text>
</comment>
<protein>
    <recommendedName>
        <fullName>Probable cytochrome c oxidase polypeptide 4</fullName>
        <ecNumber>7.1.1.9</ecNumber>
    </recommendedName>
    <alternativeName>
        <fullName>Cytochrome aa3 subunit 4</fullName>
    </alternativeName>
    <alternativeName>
        <fullName>Cytochrome c oxidase polypeptide IV</fullName>
    </alternativeName>
</protein>
<sequence length="132" mass="14581">MKIQGKMFIWLSVFILAVAVVYGYWSKEPAGTTALFLAFGLAIMIGFYLAFTARRVDAGAQDDMEADVADEAGEVGFFSPHSWQPLSLAVGGALAFLGIAVGWWVMYFSAPILMVGLFGWVFEYYRGENRTQ</sequence>
<proteinExistence type="inferred from homology"/>
<organism>
    <name type="scientific">Streptomyces coelicolor (strain ATCC BAA-471 / A3(2) / M145)</name>
    <dbReference type="NCBI Taxonomy" id="100226"/>
    <lineage>
        <taxon>Bacteria</taxon>
        <taxon>Bacillati</taxon>
        <taxon>Actinomycetota</taxon>
        <taxon>Actinomycetes</taxon>
        <taxon>Kitasatosporales</taxon>
        <taxon>Streptomycetaceae</taxon>
        <taxon>Streptomyces</taxon>
        <taxon>Streptomyces albidoflavus group</taxon>
    </lineage>
</organism>
<keyword id="KW-1003">Cell membrane</keyword>
<keyword id="KW-0472">Membrane</keyword>
<keyword id="KW-1185">Reference proteome</keyword>
<keyword id="KW-1278">Translocase</keyword>
<keyword id="KW-0812">Transmembrane</keyword>
<keyword id="KW-1133">Transmembrane helix</keyword>
<reference key="1">
    <citation type="journal article" date="2002" name="Nature">
        <title>Complete genome sequence of the model actinomycete Streptomyces coelicolor A3(2).</title>
        <authorList>
            <person name="Bentley S.D."/>
            <person name="Chater K.F."/>
            <person name="Cerdeno-Tarraga A.-M."/>
            <person name="Challis G.L."/>
            <person name="Thomson N.R."/>
            <person name="James K.D."/>
            <person name="Harris D.E."/>
            <person name="Quail M.A."/>
            <person name="Kieser H."/>
            <person name="Harper D."/>
            <person name="Bateman A."/>
            <person name="Brown S."/>
            <person name="Chandra G."/>
            <person name="Chen C.W."/>
            <person name="Collins M."/>
            <person name="Cronin A."/>
            <person name="Fraser A."/>
            <person name="Goble A."/>
            <person name="Hidalgo J."/>
            <person name="Hornsby T."/>
            <person name="Howarth S."/>
            <person name="Huang C.-H."/>
            <person name="Kieser T."/>
            <person name="Larke L."/>
            <person name="Murphy L.D."/>
            <person name="Oliver K."/>
            <person name="O'Neil S."/>
            <person name="Rabbinowitsch E."/>
            <person name="Rajandream M.A."/>
            <person name="Rutherford K.M."/>
            <person name="Rutter S."/>
            <person name="Seeger K."/>
            <person name="Saunders D."/>
            <person name="Sharp S."/>
            <person name="Squares R."/>
            <person name="Squares S."/>
            <person name="Taylor K."/>
            <person name="Warren T."/>
            <person name="Wietzorrek A."/>
            <person name="Woodward J.R."/>
            <person name="Barrell B.G."/>
            <person name="Parkhill J."/>
            <person name="Hopwood D.A."/>
        </authorList>
    </citation>
    <scope>NUCLEOTIDE SEQUENCE [LARGE SCALE GENOMIC DNA]</scope>
    <source>
        <strain>ATCC BAA-471 / A3(2) / M145</strain>
    </source>
</reference>
<evidence type="ECO:0000250" key="1"/>
<evidence type="ECO:0000255" key="2"/>
<evidence type="ECO:0000305" key="3"/>
<feature type="chain" id="PRO_0000220022" description="Probable cytochrome c oxidase polypeptide 4">
    <location>
        <begin position="1"/>
        <end position="132"/>
    </location>
</feature>
<feature type="transmembrane region" description="Helical" evidence="2">
    <location>
        <begin position="5"/>
        <end position="25"/>
    </location>
</feature>
<feature type="transmembrane region" description="Helical" evidence="2">
    <location>
        <begin position="33"/>
        <end position="53"/>
    </location>
</feature>
<feature type="transmembrane region" description="Helical" evidence="2">
    <location>
        <begin position="88"/>
        <end position="108"/>
    </location>
</feature>
<feature type="transmembrane region" description="Helical" evidence="2">
    <location>
        <begin position="110"/>
        <end position="127"/>
    </location>
</feature>
<dbReference type="EC" id="7.1.1.9"/>
<dbReference type="EMBL" id="AL939111">
    <property type="protein sequence ID" value="CAB39881.1"/>
    <property type="molecule type" value="Genomic_DNA"/>
</dbReference>
<dbReference type="PIR" id="T35536">
    <property type="entry name" value="T35536"/>
</dbReference>
<dbReference type="RefSeq" id="NP_626410.1">
    <property type="nucleotide sequence ID" value="NC_003888.3"/>
</dbReference>
<dbReference type="RefSeq" id="WP_003976661.1">
    <property type="nucleotide sequence ID" value="NZ_VNID01000001.1"/>
</dbReference>
<dbReference type="SMR" id="Q9X812"/>
<dbReference type="STRING" id="100226.gene:17759752"/>
<dbReference type="TCDB" id="3.D.4.4.5">
    <property type="family name" value="the proton-translocating cytochrome oxidase (cox) superfamily"/>
</dbReference>
<dbReference type="PaxDb" id="100226-SCO2154"/>
<dbReference type="KEGG" id="sco:SCO2154"/>
<dbReference type="PATRIC" id="fig|100226.15.peg.2189"/>
<dbReference type="eggNOG" id="ENOG5031SSV">
    <property type="taxonomic scope" value="Bacteria"/>
</dbReference>
<dbReference type="HOGENOM" id="CLU_145919_0_0_11"/>
<dbReference type="InParanoid" id="Q9X812"/>
<dbReference type="OrthoDB" id="5244617at2"/>
<dbReference type="PhylomeDB" id="Q9X812"/>
<dbReference type="Proteomes" id="UP000001973">
    <property type="component" value="Chromosome"/>
</dbReference>
<dbReference type="GO" id="GO:0005886">
    <property type="term" value="C:plasma membrane"/>
    <property type="evidence" value="ECO:0007669"/>
    <property type="project" value="UniProtKB-SubCell"/>
</dbReference>
<dbReference type="GO" id="GO:0004129">
    <property type="term" value="F:cytochrome-c oxidase activity"/>
    <property type="evidence" value="ECO:0007669"/>
    <property type="project" value="UniProtKB-EC"/>
</dbReference>
<dbReference type="GO" id="GO:0022900">
    <property type="term" value="P:electron transport chain"/>
    <property type="evidence" value="ECO:0007669"/>
    <property type="project" value="InterPro"/>
</dbReference>
<dbReference type="InterPro" id="IPR021050">
    <property type="entry name" value="Cyt_c_oxidase_su4_actinobac"/>
</dbReference>
<dbReference type="Pfam" id="PF12270">
    <property type="entry name" value="Cyt_c_ox_IV"/>
    <property type="match status" value="1"/>
</dbReference>
<dbReference type="PIRSF" id="PIRSF017385">
    <property type="entry name" value="CtaF"/>
    <property type="match status" value="1"/>
</dbReference>